<accession>P0A3I9</accession>
<accession>O68443</accession>
<evidence type="ECO:0000255" key="1">
    <source>
        <dbReference type="HAMAP-Rule" id="MF_00081"/>
    </source>
</evidence>
<name>HRCA_RHIRD</name>
<comment type="function">
    <text evidence="1">Negative regulator of class I heat shock genes (grpE-dnaK-dnaJ and groELS operons). Prevents heat-shock induction of these operons.</text>
</comment>
<comment type="similarity">
    <text evidence="1">Belongs to the HrcA family.</text>
</comment>
<keyword id="KW-0678">Repressor</keyword>
<keyword id="KW-0346">Stress response</keyword>
<keyword id="KW-0804">Transcription</keyword>
<keyword id="KW-0805">Transcription regulation</keyword>
<gene>
    <name evidence="1" type="primary">hrcA</name>
</gene>
<protein>
    <recommendedName>
        <fullName evidence="1">Heat-inducible transcription repressor HrcA</fullName>
    </recommendedName>
</protein>
<organism>
    <name type="scientific">Rhizobium radiobacter</name>
    <name type="common">Agrobacterium tumefaciens</name>
    <name type="synonym">Agrobacterium radiobacter</name>
    <dbReference type="NCBI Taxonomy" id="358"/>
    <lineage>
        <taxon>Bacteria</taxon>
        <taxon>Pseudomonadati</taxon>
        <taxon>Pseudomonadota</taxon>
        <taxon>Alphaproteobacteria</taxon>
        <taxon>Hyphomicrobiales</taxon>
        <taxon>Rhizobiaceae</taxon>
        <taxon>Rhizobium/Agrobacterium group</taxon>
        <taxon>Agrobacterium</taxon>
        <taxon>Agrobacterium tumefaciens complex</taxon>
    </lineage>
</organism>
<reference key="1">
    <citation type="journal article" date="1999" name="J. Bacteriol.">
        <title>Differential and independent roles of a sigma32 homolog (RpoH) and an HrcA repressor in the heat shock response of Agrobacterium tumefaciens.</title>
        <authorList>
            <person name="Nakahigashi K."/>
            <person name="Ron E.Z."/>
            <person name="Yanagi H."/>
            <person name="Yura T."/>
        </authorList>
    </citation>
    <scope>NUCLEOTIDE SEQUENCE [GENOMIC DNA]</scope>
    <source>
        <strain>GV3101</strain>
    </source>
</reference>
<feature type="chain" id="PRO_0000182438" description="Heat-inducible transcription repressor HrcA">
    <location>
        <begin position="1"/>
        <end position="363"/>
    </location>
</feature>
<dbReference type="EMBL" id="AF039940">
    <property type="protein sequence ID" value="AAC18052.1"/>
    <property type="molecule type" value="Genomic_DNA"/>
</dbReference>
<dbReference type="RefSeq" id="WP_006310175.1">
    <property type="nucleotide sequence ID" value="NZ_CP116692.1"/>
</dbReference>
<dbReference type="SMR" id="P0A3I9"/>
<dbReference type="GeneID" id="1132366"/>
<dbReference type="PATRIC" id="fig|358.65.peg.875"/>
<dbReference type="eggNOG" id="COG1420">
    <property type="taxonomic scope" value="Bacteria"/>
</dbReference>
<dbReference type="GO" id="GO:0003677">
    <property type="term" value="F:DNA binding"/>
    <property type="evidence" value="ECO:0007669"/>
    <property type="project" value="InterPro"/>
</dbReference>
<dbReference type="GO" id="GO:0045892">
    <property type="term" value="P:negative regulation of DNA-templated transcription"/>
    <property type="evidence" value="ECO:0007669"/>
    <property type="project" value="UniProtKB-UniRule"/>
</dbReference>
<dbReference type="Gene3D" id="3.30.450.40">
    <property type="match status" value="1"/>
</dbReference>
<dbReference type="Gene3D" id="3.30.390.60">
    <property type="entry name" value="Heat-inducible transcription repressor hrca homolog, domain 3"/>
    <property type="match status" value="1"/>
</dbReference>
<dbReference type="Gene3D" id="1.10.10.10">
    <property type="entry name" value="Winged helix-like DNA-binding domain superfamily/Winged helix DNA-binding domain"/>
    <property type="match status" value="1"/>
</dbReference>
<dbReference type="HAMAP" id="MF_00081">
    <property type="entry name" value="HrcA"/>
    <property type="match status" value="1"/>
</dbReference>
<dbReference type="InterPro" id="IPR029016">
    <property type="entry name" value="GAF-like_dom_sf"/>
</dbReference>
<dbReference type="InterPro" id="IPR002571">
    <property type="entry name" value="HrcA"/>
</dbReference>
<dbReference type="InterPro" id="IPR021153">
    <property type="entry name" value="HrcA_C"/>
</dbReference>
<dbReference type="InterPro" id="IPR036388">
    <property type="entry name" value="WH-like_DNA-bd_sf"/>
</dbReference>
<dbReference type="InterPro" id="IPR036390">
    <property type="entry name" value="WH_DNA-bd_sf"/>
</dbReference>
<dbReference type="InterPro" id="IPR023120">
    <property type="entry name" value="WHTH_transcript_rep_HrcA_IDD"/>
</dbReference>
<dbReference type="NCBIfam" id="TIGR00331">
    <property type="entry name" value="hrcA"/>
    <property type="match status" value="1"/>
</dbReference>
<dbReference type="PANTHER" id="PTHR34824">
    <property type="entry name" value="HEAT-INDUCIBLE TRANSCRIPTION REPRESSOR HRCA"/>
    <property type="match status" value="1"/>
</dbReference>
<dbReference type="PANTHER" id="PTHR34824:SF1">
    <property type="entry name" value="HEAT-INDUCIBLE TRANSCRIPTION REPRESSOR HRCA"/>
    <property type="match status" value="1"/>
</dbReference>
<dbReference type="Pfam" id="PF01628">
    <property type="entry name" value="HrcA"/>
    <property type="match status" value="1"/>
</dbReference>
<dbReference type="PIRSF" id="PIRSF005485">
    <property type="entry name" value="HrcA"/>
    <property type="match status" value="1"/>
</dbReference>
<dbReference type="SUPFAM" id="SSF55781">
    <property type="entry name" value="GAF domain-like"/>
    <property type="match status" value="1"/>
</dbReference>
<dbReference type="SUPFAM" id="SSF46785">
    <property type="entry name" value="Winged helix' DNA-binding domain"/>
    <property type="match status" value="1"/>
</dbReference>
<proteinExistence type="inferred from homology"/>
<sequence length="363" mass="39900">MGFSAPLSKDQASLLDERSREIFRRIVEGYLDTGEPLGSRSLSRLLPMSLSPASVRNVMSDLEELGLIYSPHISAGRLPTQTGLRFFVDAFMQVGDLPADERANIDRQIGPVAGHEQSLEGLLTEASRMLSGMSRGAGLVLTAKNDVILKHVEFIRLEPTKALAVLVGDHNQVENRIIELPAGISSSQLTEAANFINAHLSGQTLQELRGQFQTQRTELQSELGMLAQDLVERGLAIWAGDNEEGKLGRLIVRGRSNLLEGLAGEEDIDRVRMLFDDLERKENLIEILNLAESGSGVRIFIGSENKLFSLSGSSLIVAPYRDEENRVVGAVGVIGPTRLNYARIVPMVDYTAQIMARLSRKQR</sequence>